<accession>Q6ENX2</accession>
<feature type="chain" id="PRO_0000067895" description="DNA-directed RNA polymerase subunit beta'">
    <location>
        <begin position="1"/>
        <end position="683"/>
    </location>
</feature>
<feature type="binding site" evidence="1">
    <location>
        <position position="69"/>
    </location>
    <ligand>
        <name>Zn(2+)</name>
        <dbReference type="ChEBI" id="CHEBI:29105"/>
    </ligand>
</feature>
<feature type="binding site" evidence="1">
    <location>
        <position position="71"/>
    </location>
    <ligand>
        <name>Zn(2+)</name>
        <dbReference type="ChEBI" id="CHEBI:29105"/>
    </ligand>
</feature>
<feature type="binding site" evidence="1">
    <location>
        <position position="87"/>
    </location>
    <ligand>
        <name>Zn(2+)</name>
        <dbReference type="ChEBI" id="CHEBI:29105"/>
    </ligand>
</feature>
<feature type="binding site" evidence="1">
    <location>
        <position position="90"/>
    </location>
    <ligand>
        <name>Zn(2+)</name>
        <dbReference type="ChEBI" id="CHEBI:29105"/>
    </ligand>
</feature>
<feature type="binding site" evidence="1">
    <location>
        <position position="489"/>
    </location>
    <ligand>
        <name>Mg(2+)</name>
        <dbReference type="ChEBI" id="CHEBI:18420"/>
    </ligand>
</feature>
<feature type="binding site" evidence="1">
    <location>
        <position position="491"/>
    </location>
    <ligand>
        <name>Mg(2+)</name>
        <dbReference type="ChEBI" id="CHEBI:18420"/>
    </ligand>
</feature>
<feature type="binding site" evidence="1">
    <location>
        <position position="493"/>
    </location>
    <ligand>
        <name>Mg(2+)</name>
        <dbReference type="ChEBI" id="CHEBI:18420"/>
    </ligand>
</feature>
<reference key="1">
    <citation type="journal article" date="2004" name="DNA Res.">
        <title>Complete nucleotide sequence of the sugarcane (Saccharum officinarum) chloroplast genome: a comparative analysis of four monocot chloroplast genomes.</title>
        <authorList>
            <person name="Asano T."/>
            <person name="Tsudzuki T."/>
            <person name="Takahashi S."/>
            <person name="Shimada H."/>
            <person name="Kadowaki K."/>
        </authorList>
    </citation>
    <scope>NUCLEOTIDE SEQUENCE [LARGE SCALE GENOMIC DNA]</scope>
</reference>
<geneLocation type="chloroplast"/>
<organism>
    <name type="scientific">Saccharum officinarum</name>
    <name type="common">Sugarcane</name>
    <dbReference type="NCBI Taxonomy" id="4547"/>
    <lineage>
        <taxon>Eukaryota</taxon>
        <taxon>Viridiplantae</taxon>
        <taxon>Streptophyta</taxon>
        <taxon>Embryophyta</taxon>
        <taxon>Tracheophyta</taxon>
        <taxon>Spermatophyta</taxon>
        <taxon>Magnoliopsida</taxon>
        <taxon>Liliopsida</taxon>
        <taxon>Poales</taxon>
        <taxon>Poaceae</taxon>
        <taxon>PACMAD clade</taxon>
        <taxon>Panicoideae</taxon>
        <taxon>Andropogonodae</taxon>
        <taxon>Andropogoneae</taxon>
        <taxon>Saccharinae</taxon>
        <taxon>Saccharum</taxon>
        <taxon>Saccharum officinarum species complex</taxon>
    </lineage>
</organism>
<dbReference type="EC" id="2.7.7.6" evidence="1"/>
<dbReference type="EMBL" id="AP006714">
    <property type="protein sequence ID" value="BAD27284.1"/>
    <property type="molecule type" value="Genomic_DNA"/>
</dbReference>
<dbReference type="RefSeq" id="YP_009389562.1">
    <property type="nucleotide sequence ID" value="NC_035224.1"/>
</dbReference>
<dbReference type="SMR" id="Q6ENX2"/>
<dbReference type="GeneID" id="33347839"/>
<dbReference type="GO" id="GO:0009507">
    <property type="term" value="C:chloroplast"/>
    <property type="evidence" value="ECO:0007669"/>
    <property type="project" value="UniProtKB-SubCell"/>
</dbReference>
<dbReference type="GO" id="GO:0000428">
    <property type="term" value="C:DNA-directed RNA polymerase complex"/>
    <property type="evidence" value="ECO:0007669"/>
    <property type="project" value="UniProtKB-KW"/>
</dbReference>
<dbReference type="GO" id="GO:0005739">
    <property type="term" value="C:mitochondrion"/>
    <property type="evidence" value="ECO:0007669"/>
    <property type="project" value="GOC"/>
</dbReference>
<dbReference type="GO" id="GO:0003677">
    <property type="term" value="F:DNA binding"/>
    <property type="evidence" value="ECO:0007669"/>
    <property type="project" value="UniProtKB-UniRule"/>
</dbReference>
<dbReference type="GO" id="GO:0003899">
    <property type="term" value="F:DNA-directed RNA polymerase activity"/>
    <property type="evidence" value="ECO:0007669"/>
    <property type="project" value="UniProtKB-UniRule"/>
</dbReference>
<dbReference type="GO" id="GO:0000287">
    <property type="term" value="F:magnesium ion binding"/>
    <property type="evidence" value="ECO:0007669"/>
    <property type="project" value="UniProtKB-UniRule"/>
</dbReference>
<dbReference type="GO" id="GO:0008270">
    <property type="term" value="F:zinc ion binding"/>
    <property type="evidence" value="ECO:0007669"/>
    <property type="project" value="UniProtKB-UniRule"/>
</dbReference>
<dbReference type="GO" id="GO:0006351">
    <property type="term" value="P:DNA-templated transcription"/>
    <property type="evidence" value="ECO:0007669"/>
    <property type="project" value="UniProtKB-UniRule"/>
</dbReference>
<dbReference type="Gene3D" id="1.10.40.90">
    <property type="match status" value="1"/>
</dbReference>
<dbReference type="Gene3D" id="2.40.40.20">
    <property type="match status" value="1"/>
</dbReference>
<dbReference type="Gene3D" id="4.10.860.120">
    <property type="entry name" value="RNA polymerase II, clamp domain"/>
    <property type="match status" value="1"/>
</dbReference>
<dbReference type="Gene3D" id="1.10.274.100">
    <property type="entry name" value="RNA polymerase Rpb1, domain 3"/>
    <property type="match status" value="1"/>
</dbReference>
<dbReference type="HAMAP" id="MF_01323">
    <property type="entry name" value="RNApol_bact_RpoC1"/>
    <property type="match status" value="1"/>
</dbReference>
<dbReference type="InterPro" id="IPR045867">
    <property type="entry name" value="DNA-dir_RpoC_beta_prime"/>
</dbReference>
<dbReference type="InterPro" id="IPR000722">
    <property type="entry name" value="RNA_pol_asu"/>
</dbReference>
<dbReference type="InterPro" id="IPR006592">
    <property type="entry name" value="RNA_pol_N"/>
</dbReference>
<dbReference type="InterPro" id="IPR007080">
    <property type="entry name" value="RNA_pol_Rpb1_1"/>
</dbReference>
<dbReference type="InterPro" id="IPR042102">
    <property type="entry name" value="RNA_pol_Rpb1_3_sf"/>
</dbReference>
<dbReference type="InterPro" id="IPR044893">
    <property type="entry name" value="RNA_pol_Rpb1_clamp_domain"/>
</dbReference>
<dbReference type="InterPro" id="IPR034678">
    <property type="entry name" value="RNApol_RpoC1"/>
</dbReference>
<dbReference type="PANTHER" id="PTHR19376">
    <property type="entry name" value="DNA-DIRECTED RNA POLYMERASE"/>
    <property type="match status" value="1"/>
</dbReference>
<dbReference type="PANTHER" id="PTHR19376:SF54">
    <property type="entry name" value="DNA-DIRECTED RNA POLYMERASE SUBUNIT BETA"/>
    <property type="match status" value="1"/>
</dbReference>
<dbReference type="Pfam" id="PF04997">
    <property type="entry name" value="RNA_pol_Rpb1_1"/>
    <property type="match status" value="1"/>
</dbReference>
<dbReference type="Pfam" id="PF00623">
    <property type="entry name" value="RNA_pol_Rpb1_2"/>
    <property type="match status" value="2"/>
</dbReference>
<dbReference type="SMART" id="SM00663">
    <property type="entry name" value="RPOLA_N"/>
    <property type="match status" value="1"/>
</dbReference>
<dbReference type="SUPFAM" id="SSF64484">
    <property type="entry name" value="beta and beta-prime subunits of DNA dependent RNA-polymerase"/>
    <property type="match status" value="1"/>
</dbReference>
<comment type="function">
    <text evidence="1">DNA-dependent RNA polymerase catalyzes the transcription of DNA into RNA using the four ribonucleoside triphosphates as substrates.</text>
</comment>
<comment type="catalytic activity">
    <reaction evidence="1">
        <text>RNA(n) + a ribonucleoside 5'-triphosphate = RNA(n+1) + diphosphate</text>
        <dbReference type="Rhea" id="RHEA:21248"/>
        <dbReference type="Rhea" id="RHEA-COMP:14527"/>
        <dbReference type="Rhea" id="RHEA-COMP:17342"/>
        <dbReference type="ChEBI" id="CHEBI:33019"/>
        <dbReference type="ChEBI" id="CHEBI:61557"/>
        <dbReference type="ChEBI" id="CHEBI:140395"/>
        <dbReference type="EC" id="2.7.7.6"/>
    </reaction>
</comment>
<comment type="cofactor">
    <cofactor evidence="1">
        <name>Mg(2+)</name>
        <dbReference type="ChEBI" id="CHEBI:18420"/>
    </cofactor>
    <text evidence="1">Binds 1 Mg(2+) ion per subunit.</text>
</comment>
<comment type="cofactor">
    <cofactor evidence="1">
        <name>Zn(2+)</name>
        <dbReference type="ChEBI" id="CHEBI:29105"/>
    </cofactor>
    <text evidence="1">Binds 1 Zn(2+) ion per subunit.</text>
</comment>
<comment type="subunit">
    <text evidence="1">In plastids the minimal PEP RNA polymerase catalytic core is composed of four subunits: alpha, beta, beta', and beta''. When a (nuclear-encoded) sigma factor is associated with the core the holoenzyme is formed, which can initiate transcription.</text>
</comment>
<comment type="subcellular location">
    <subcellularLocation>
        <location evidence="1">Plastid</location>
        <location evidence="1">Chloroplast</location>
    </subcellularLocation>
</comment>
<comment type="similarity">
    <text evidence="1">Belongs to the RNA polymerase beta' chain family. RpoC1 subfamily.</text>
</comment>
<sequence>MIDQYKHKQLQIGLVSPQQIKAWAKKILPNGEVVGEVTRPSTFHYKTDKPEKDGLFCERIFGPIKSGICACGNSRASVAENEDERFCQKCGVEFVDSRIRRYQMGYIKLACPVTHVWYLKGLPSYIANLLDKPLKKLEGLVYGDFSFARPSAKKPTFLRLRGLFEDEISSCNHSISPFFSTPGFATFRNREIATGAGAIREQLADLDLRIIIENSLVEWKELEDEGYSGDEWEDRKRRIRKVFLIRRMQLAKHFIQTNVEPEWMVLCLLPVLPPELRPIVYRSGDKVVTSDINELYKRVIRRNNNLAYLLKRSELAPADLVMCQEKLVQEAVDTLLDSGSRGQPMRDGHNKVYKSLSDVIEGKEGRFRETLLGKRVDYSGRSVIVVGPSLSLHQCGLPLEIAIKLFQLFVIRDLITKRATSNVRIAKRKIWEKEPIVWEILQEVMRGHPVLLNRAPTLHRLGIQAFQPTLVEGRTICLHPLVCKGFNADFDGDQMAVHLPLSLEAQAEARLLMFSHMNLLSPAIGDPICVPTQDMLIGLYVLTIGNRRGICANRYNSCGNSPNKKINYNNNNYYKYTKDKEPHFSSSYDALGAYRQKRIGLNSPLWLRWKLDQRIVGSREVPIEVQYESFGTYHEIYAHYLVVGNRKKEIRSIYIRTTLGHISFYREIEEAVQGFSRAYSYTI</sequence>
<name>RPOC1_SACOF</name>
<gene>
    <name evidence="1" type="primary">rpoC1</name>
</gene>
<evidence type="ECO:0000255" key="1">
    <source>
        <dbReference type="HAMAP-Rule" id="MF_01323"/>
    </source>
</evidence>
<keyword id="KW-0150">Chloroplast</keyword>
<keyword id="KW-0240">DNA-directed RNA polymerase</keyword>
<keyword id="KW-0460">Magnesium</keyword>
<keyword id="KW-0479">Metal-binding</keyword>
<keyword id="KW-0548">Nucleotidyltransferase</keyword>
<keyword id="KW-0934">Plastid</keyword>
<keyword id="KW-0804">Transcription</keyword>
<keyword id="KW-0808">Transferase</keyword>
<keyword id="KW-0862">Zinc</keyword>
<proteinExistence type="inferred from homology"/>
<protein>
    <recommendedName>
        <fullName evidence="1">DNA-directed RNA polymerase subunit beta'</fullName>
        <ecNumber evidence="1">2.7.7.6</ecNumber>
    </recommendedName>
    <alternativeName>
        <fullName evidence="1">PEP</fullName>
    </alternativeName>
    <alternativeName>
        <fullName evidence="1">Plastid-encoded RNA polymerase subunit beta'</fullName>
        <shortName evidence="1">RNA polymerase subunit beta'</shortName>
    </alternativeName>
</protein>